<feature type="chain" id="PRO_0000389100" description="BAG family molecular chaperone regulator 1">
    <location>
        <begin position="1"/>
        <end position="358"/>
    </location>
</feature>
<feature type="repeat" description="1">
    <location>
        <begin position="102"/>
        <end position="111"/>
    </location>
</feature>
<feature type="repeat" description="2">
    <location>
        <begin position="114"/>
        <end position="119"/>
    </location>
</feature>
<feature type="repeat" description="3">
    <location>
        <begin position="120"/>
        <end position="125"/>
    </location>
</feature>
<feature type="repeat" description="4">
    <location>
        <begin position="126"/>
        <end position="131"/>
    </location>
</feature>
<feature type="repeat" description="5">
    <location>
        <begin position="132"/>
        <end position="137"/>
    </location>
</feature>
<feature type="repeat" description="6">
    <location>
        <begin position="144"/>
        <end position="149"/>
    </location>
</feature>
<feature type="repeat" description="7">
    <location>
        <begin position="150"/>
        <end position="155"/>
    </location>
</feature>
<feature type="domain" description="Ubiquitin-like" evidence="4">
    <location>
        <begin position="157"/>
        <end position="237"/>
    </location>
</feature>
<feature type="domain" description="BAG" evidence="5">
    <location>
        <begin position="259"/>
        <end position="339"/>
    </location>
</feature>
<feature type="region of interest" description="Disordered" evidence="6">
    <location>
        <begin position="1"/>
        <end position="113"/>
    </location>
</feature>
<feature type="region of interest" description="7 X 6 AA tandem repeat of E-E-X(4)">
    <location>
        <begin position="114"/>
        <end position="212"/>
    </location>
</feature>
<feature type="region of interest" description="Interaction with HSPA8" evidence="1">
    <location>
        <begin position="185"/>
        <end position="232"/>
    </location>
</feature>
<feature type="region of interest" description="Interaction with PPP1R15A" evidence="1">
    <location>
        <begin position="229"/>
        <end position="358"/>
    </location>
</feature>
<feature type="compositionally biased region" description="Basic and acidic residues" evidence="6">
    <location>
        <begin position="1"/>
        <end position="14"/>
    </location>
</feature>
<feature type="compositionally biased region" description="Basic and acidic residues" evidence="6">
    <location>
        <begin position="26"/>
        <end position="39"/>
    </location>
</feature>
<feature type="compositionally biased region" description="Basic and acidic residues" evidence="6">
    <location>
        <begin position="85"/>
        <end position="94"/>
    </location>
</feature>
<evidence type="ECO:0000250" key="1"/>
<evidence type="ECO:0000250" key="2">
    <source>
        <dbReference type="UniProtKB" id="Q60739"/>
    </source>
</evidence>
<evidence type="ECO:0000250" key="3">
    <source>
        <dbReference type="UniProtKB" id="Q99933"/>
    </source>
</evidence>
<evidence type="ECO:0000255" key="4">
    <source>
        <dbReference type="PROSITE-ProRule" id="PRU00214"/>
    </source>
</evidence>
<evidence type="ECO:0000255" key="5">
    <source>
        <dbReference type="PROSITE-ProRule" id="PRU00369"/>
    </source>
</evidence>
<evidence type="ECO:0000256" key="6">
    <source>
        <dbReference type="SAM" id="MobiDB-lite"/>
    </source>
</evidence>
<evidence type="ECO:0000269" key="7">
    <source>
    </source>
</evidence>
<comment type="function">
    <text evidence="3 7">Co-chaperone for HSP70 and HSC70 chaperone proteins. Acts as a nucleotide-exchange factor (NEF) promoting the release of ADP from the HSP70 and HSC70 proteins thereby triggering client/substrate protein release. Nucleotide release is mediated via its binding to the nucleotide-binding domain (NBD) of HSPA8/HSC70 where as the substrate release is mediated via its binding to the substrate-binding domain (SBD) of HSPA8/HSC70. Inhibits the pro-apoptotic function of PPP1R15A, and has anti-apoptotic activity. Markedly increases the anti-cell death function of BCL2 induced by various stimuli. Involved in the STUB1-mediated proteasomal degradation of ESR1 in response to age-related circulating estradiol (17-beta-estradiol/E2) decline, thereby promotes neuronal apoptosis in response to ischemic reperfusion injury (PubMed:21808025).</text>
</comment>
<comment type="subunit">
    <text evidence="2 3 7">Homodimer. Forms a heteromeric complex with HSP70/HSC70. Binds to the ATPase domain of HSP/HSC70 chaperones. Interacts with NR3C1. Interacts with the N-terminal region of MAPRE2. Interacts with PPP1R15A. Interacts with BCL2 in an ATP-dependent manner. Interacts with SIAH1, SIAH2, HSPA8 (via NBD), HSPA1A (via NBD) and HSPA1B (via NBD). Interacts with ESR1; the interaction is promoted in the absence of estradiol (17-beta-estradiol/E2) (PubMed:21808025).</text>
</comment>
<comment type="subcellular location">
    <subcellularLocation>
        <location evidence="1">Nucleus</location>
    </subcellularLocation>
    <subcellularLocation>
        <location evidence="1">Cytoplasm</location>
    </subcellularLocation>
</comment>
<comment type="tissue specificity">
    <text evidence="7">Expressed in the CA1 region of the hippocampus (at protein level) (PubMed:21808025). Expressed in the uterus (at protein level) (PubMed:21808025).</text>
</comment>
<comment type="PTM">
    <text evidence="1">Ubiquitinated; mediated by SIAH1 or SIAH2 and leading to its subsequent proteasomal degradation.</text>
</comment>
<organism>
    <name type="scientific">Rattus norvegicus</name>
    <name type="common">Rat</name>
    <dbReference type="NCBI Taxonomy" id="10116"/>
    <lineage>
        <taxon>Eukaryota</taxon>
        <taxon>Metazoa</taxon>
        <taxon>Chordata</taxon>
        <taxon>Craniata</taxon>
        <taxon>Vertebrata</taxon>
        <taxon>Euteleostomi</taxon>
        <taxon>Mammalia</taxon>
        <taxon>Eutheria</taxon>
        <taxon>Euarchontoglires</taxon>
        <taxon>Glires</taxon>
        <taxon>Rodentia</taxon>
        <taxon>Myomorpha</taxon>
        <taxon>Muroidea</taxon>
        <taxon>Muridae</taxon>
        <taxon>Murinae</taxon>
        <taxon>Rattus</taxon>
    </lineage>
</organism>
<keyword id="KW-0053">Apoptosis</keyword>
<keyword id="KW-0143">Chaperone</keyword>
<keyword id="KW-0963">Cytoplasm</keyword>
<keyword id="KW-0539">Nucleus</keyword>
<keyword id="KW-1185">Reference proteome</keyword>
<keyword id="KW-0677">Repeat</keyword>
<keyword id="KW-0832">Ubl conjugation</keyword>
<gene>
    <name type="primary">Bag1</name>
</gene>
<reference key="1">
    <citation type="journal article" date="2004" name="Genome Res.">
        <title>The status, quality, and expansion of the NIH full-length cDNA project: the Mammalian Gene Collection (MGC).</title>
        <authorList>
            <consortium name="The MGC Project Team"/>
        </authorList>
    </citation>
    <scope>NUCLEOTIDE SEQUENCE [LARGE SCALE MRNA]</scope>
    <source>
        <tissue>Brain</tissue>
    </source>
</reference>
<reference key="2">
    <citation type="journal article" date="2011" name="Proc. Natl. Acad. Sci. U.S.A.">
        <title>C terminus of Hsc70-interacting protein (CHIP)-mediated degradation of hippocampal estrogen receptor-alpha and the critical period hypothesis of estrogen neuroprotection.</title>
        <authorList>
            <person name="Zhang Q.G."/>
            <person name="Han D."/>
            <person name="Wang R.M."/>
            <person name="Dong Y."/>
            <person name="Yang F."/>
            <person name="Vadlamudi R.K."/>
            <person name="Brann D.W."/>
        </authorList>
    </citation>
    <scope>FUNCTION</scope>
    <scope>INTERACTION WITH ESR1</scope>
    <scope>TISSUE SPECIFICITY</scope>
</reference>
<accession>B0K019</accession>
<proteinExistence type="evidence at protein level"/>
<name>BAG1_RAT</name>
<protein>
    <recommendedName>
        <fullName>BAG family molecular chaperone regulator 1</fullName>
        <shortName>BAG-1</shortName>
    </recommendedName>
    <alternativeName>
        <fullName>Bcl-2-associated athanogene 1</fullName>
    </alternativeName>
</protein>
<sequence>MADRGGARRPRGDQEPLGPRLRAPRSARETRQSESRAERGLPPSQRSSVRSAASGHDRSTRGAASGACKPRVKKKVRPRSSQSEKVAHSKELTRSKKLTRSKKVTGTQEATQVEEVTTIEEATQTEEITVAEEVTQTENMAQTEEMVQTEEMEPPTLSVVVTHSNERYDLLVTPQQGNSEPIVQDLAQLVEEATGVPLPFQKLIFKGKSLKEMETPLSALGMQNGCRVMLIGEKSNPEEEAELKKLKDLEVSVEKTANHLEELNKELSDIQQGFLAKELQAEALCRLDRKIKATIEQFMKILEEIDTMVLPENFKDSRLKRKNLVKKVQVFLAECDTVEQYICQETERLQSTNLALPE</sequence>
<dbReference type="EMBL" id="BC159418">
    <property type="protein sequence ID" value="AAI59419.1"/>
    <property type="molecule type" value="mRNA"/>
</dbReference>
<dbReference type="RefSeq" id="NP_001100117.2">
    <property type="nucleotide sequence ID" value="NM_001106647.3"/>
</dbReference>
<dbReference type="RefSeq" id="NP_001243013.1">
    <property type="nucleotide sequence ID" value="NM_001256084.1"/>
</dbReference>
<dbReference type="SMR" id="B0K019"/>
<dbReference type="BioGRID" id="255722">
    <property type="interactions" value="6"/>
</dbReference>
<dbReference type="DIP" id="DIP-60384N"/>
<dbReference type="FunCoup" id="B0K019">
    <property type="interactions" value="620"/>
</dbReference>
<dbReference type="IntAct" id="B0K019">
    <property type="interactions" value="2"/>
</dbReference>
<dbReference type="STRING" id="10116.ENSRNOP00000011455"/>
<dbReference type="iPTMnet" id="B0K019"/>
<dbReference type="PhosphoSitePlus" id="B0K019"/>
<dbReference type="PaxDb" id="10116-ENSRNOP00000011455"/>
<dbReference type="PeptideAtlas" id="B0K019"/>
<dbReference type="GeneID" id="297994"/>
<dbReference type="KEGG" id="rno:297994"/>
<dbReference type="UCSC" id="RGD:1305203">
    <property type="organism name" value="rat"/>
</dbReference>
<dbReference type="AGR" id="RGD:1305203"/>
<dbReference type="CTD" id="573"/>
<dbReference type="RGD" id="1305203">
    <property type="gene designation" value="Bag1"/>
</dbReference>
<dbReference type="eggNOG" id="ENOG502RN5W">
    <property type="taxonomic scope" value="Eukaryota"/>
</dbReference>
<dbReference type="InParanoid" id="B0K019"/>
<dbReference type="OrthoDB" id="84781at9989"/>
<dbReference type="PhylomeDB" id="B0K019"/>
<dbReference type="Reactome" id="R-RNO-3371453">
    <property type="pathway name" value="Regulation of HSF1-mediated heat shock response"/>
</dbReference>
<dbReference type="PRO" id="PR:B0K019"/>
<dbReference type="Proteomes" id="UP000002494">
    <property type="component" value="Unplaced"/>
</dbReference>
<dbReference type="GO" id="GO:0005737">
    <property type="term" value="C:cytoplasm"/>
    <property type="evidence" value="ECO:0000318"/>
    <property type="project" value="GO_Central"/>
</dbReference>
<dbReference type="GO" id="GO:0005829">
    <property type="term" value="C:cytosol"/>
    <property type="evidence" value="ECO:0000266"/>
    <property type="project" value="RGD"/>
</dbReference>
<dbReference type="GO" id="GO:0016020">
    <property type="term" value="C:membrane"/>
    <property type="evidence" value="ECO:0000318"/>
    <property type="project" value="GO_Central"/>
</dbReference>
<dbReference type="GO" id="GO:0005634">
    <property type="term" value="C:nucleus"/>
    <property type="evidence" value="ECO:0000266"/>
    <property type="project" value="RGD"/>
</dbReference>
<dbReference type="GO" id="GO:0048471">
    <property type="term" value="C:perinuclear region of cytoplasm"/>
    <property type="evidence" value="ECO:0000314"/>
    <property type="project" value="RGD"/>
</dbReference>
<dbReference type="GO" id="GO:0000774">
    <property type="term" value="F:adenyl-nucleotide exchange factor activity"/>
    <property type="evidence" value="ECO:0000250"/>
    <property type="project" value="UniProtKB"/>
</dbReference>
<dbReference type="GO" id="GO:0051087">
    <property type="term" value="F:protein-folding chaperone binding"/>
    <property type="evidence" value="ECO:0000318"/>
    <property type="project" value="GO_Central"/>
</dbReference>
<dbReference type="GO" id="GO:0031625">
    <property type="term" value="F:ubiquitin protein ligase binding"/>
    <property type="evidence" value="ECO:0000266"/>
    <property type="project" value="RGD"/>
</dbReference>
<dbReference type="GO" id="GO:0006915">
    <property type="term" value="P:apoptotic process"/>
    <property type="evidence" value="ECO:0000266"/>
    <property type="project" value="RGD"/>
</dbReference>
<dbReference type="GO" id="GO:0051085">
    <property type="term" value="P:chaperone cofactor-dependent protein refolding"/>
    <property type="evidence" value="ECO:0000266"/>
    <property type="project" value="RGD"/>
</dbReference>
<dbReference type="GO" id="GO:0043066">
    <property type="term" value="P:negative regulation of apoptotic process"/>
    <property type="evidence" value="ECO:0000315"/>
    <property type="project" value="RGD"/>
</dbReference>
<dbReference type="GO" id="GO:2000672">
    <property type="term" value="P:negative regulation of motor neuron apoptotic process"/>
    <property type="evidence" value="ECO:0000266"/>
    <property type="project" value="RGD"/>
</dbReference>
<dbReference type="GO" id="GO:0030182">
    <property type="term" value="P:neuron differentiation"/>
    <property type="evidence" value="ECO:0000266"/>
    <property type="project" value="RGD"/>
</dbReference>
<dbReference type="GO" id="GO:0014040">
    <property type="term" value="P:positive regulation of Schwann cell differentiation"/>
    <property type="evidence" value="ECO:0000315"/>
    <property type="project" value="RGD"/>
</dbReference>
<dbReference type="GO" id="GO:0034393">
    <property type="term" value="P:positive regulation of smooth muscle cell apoptotic process"/>
    <property type="evidence" value="ECO:0000315"/>
    <property type="project" value="UniProtKB"/>
</dbReference>
<dbReference type="GO" id="GO:0070585">
    <property type="term" value="P:protein localization to mitochondrion"/>
    <property type="evidence" value="ECO:0000266"/>
    <property type="project" value="RGD"/>
</dbReference>
<dbReference type="GO" id="GO:0050821">
    <property type="term" value="P:protein stabilization"/>
    <property type="evidence" value="ECO:0000318"/>
    <property type="project" value="GO_Central"/>
</dbReference>
<dbReference type="GO" id="GO:1901423">
    <property type="term" value="P:response to benzene"/>
    <property type="evidence" value="ECO:0000270"/>
    <property type="project" value="RGD"/>
</dbReference>
<dbReference type="GO" id="GO:0035094">
    <property type="term" value="P:response to nicotine"/>
    <property type="evidence" value="ECO:0000270"/>
    <property type="project" value="RGD"/>
</dbReference>
<dbReference type="GO" id="GO:0009410">
    <property type="term" value="P:response to xenobiotic stimulus"/>
    <property type="evidence" value="ECO:0000270"/>
    <property type="project" value="RGD"/>
</dbReference>
<dbReference type="CDD" id="cd01812">
    <property type="entry name" value="Ubl_BAG1"/>
    <property type="match status" value="1"/>
</dbReference>
<dbReference type="FunFam" id="1.20.58.120:FF:000005">
    <property type="entry name" value="BAG family molecular chaperone regulator 1"/>
    <property type="match status" value="1"/>
</dbReference>
<dbReference type="FunFam" id="3.10.20.90:FF:000237">
    <property type="entry name" value="BAG family molecular chaperone regulator 1"/>
    <property type="match status" value="1"/>
</dbReference>
<dbReference type="Gene3D" id="1.20.58.120">
    <property type="entry name" value="BAG domain"/>
    <property type="match status" value="1"/>
</dbReference>
<dbReference type="Gene3D" id="3.10.20.90">
    <property type="entry name" value="Phosphatidylinositol 3-kinase Catalytic Subunit, Chain A, domain 1"/>
    <property type="match status" value="1"/>
</dbReference>
<dbReference type="InterPro" id="IPR039773">
    <property type="entry name" value="BAG_chaperone_regulator"/>
</dbReference>
<dbReference type="InterPro" id="IPR036533">
    <property type="entry name" value="BAG_dom_sf"/>
</dbReference>
<dbReference type="InterPro" id="IPR003103">
    <property type="entry name" value="BAG_domain"/>
</dbReference>
<dbReference type="InterPro" id="IPR000626">
    <property type="entry name" value="Ubiquitin-like_dom"/>
</dbReference>
<dbReference type="InterPro" id="IPR029071">
    <property type="entry name" value="Ubiquitin-like_domsf"/>
</dbReference>
<dbReference type="PANTHER" id="PTHR12329:SF16">
    <property type="entry name" value="BAG FAMILY MOLECULAR CHAPERONE REGULATOR 1"/>
    <property type="match status" value="1"/>
</dbReference>
<dbReference type="PANTHER" id="PTHR12329">
    <property type="entry name" value="BCL2-ASSOCIATED ATHANOGENE"/>
    <property type="match status" value="1"/>
</dbReference>
<dbReference type="Pfam" id="PF02179">
    <property type="entry name" value="BAG"/>
    <property type="match status" value="1"/>
</dbReference>
<dbReference type="Pfam" id="PF00240">
    <property type="entry name" value="ubiquitin"/>
    <property type="match status" value="1"/>
</dbReference>
<dbReference type="SMART" id="SM00264">
    <property type="entry name" value="BAG"/>
    <property type="match status" value="1"/>
</dbReference>
<dbReference type="SMART" id="SM00213">
    <property type="entry name" value="UBQ"/>
    <property type="match status" value="1"/>
</dbReference>
<dbReference type="SUPFAM" id="SSF63491">
    <property type="entry name" value="BAG domain"/>
    <property type="match status" value="1"/>
</dbReference>
<dbReference type="SUPFAM" id="SSF54236">
    <property type="entry name" value="Ubiquitin-like"/>
    <property type="match status" value="1"/>
</dbReference>
<dbReference type="PROSITE" id="PS51035">
    <property type="entry name" value="BAG"/>
    <property type="match status" value="1"/>
</dbReference>
<dbReference type="PROSITE" id="PS50053">
    <property type="entry name" value="UBIQUITIN_2"/>
    <property type="match status" value="1"/>
</dbReference>